<reference key="1">
    <citation type="journal article" date="2007" name="BMC Genomics">
        <title>Comparative chloroplast genomics: analyses including new sequences from the angiosperms Nuphar advena and Ranunculus macranthus.</title>
        <authorList>
            <person name="Raubeson L.A."/>
            <person name="Peery R."/>
            <person name="Chumley T.W."/>
            <person name="Dziubek C."/>
            <person name="Fourcade H.M."/>
            <person name="Boore J.L."/>
            <person name="Jansen R.K."/>
        </authorList>
    </citation>
    <scope>NUCLEOTIDE SEQUENCE [LARGE SCALE GENOMIC DNA]</scope>
</reference>
<geneLocation type="chloroplast"/>
<proteinExistence type="inferred from homology"/>
<keyword id="KW-0150">Chloroplast</keyword>
<keyword id="KW-0507">mRNA processing</keyword>
<keyword id="KW-0934">Plastid</keyword>
<keyword id="KW-0694">RNA-binding</keyword>
<keyword id="KW-0819">tRNA processing</keyword>
<name>MATK_NUPAD</name>
<accession>A1XFT6</accession>
<comment type="function">
    <text evidence="1">Usually encoded in the trnK tRNA gene intron. Probably assists in splicing its own and other chloroplast group II introns.</text>
</comment>
<comment type="subcellular location">
    <subcellularLocation>
        <location>Plastid</location>
        <location>Chloroplast</location>
    </subcellularLocation>
</comment>
<comment type="similarity">
    <text evidence="1">Belongs to the intron maturase 2 family. MatK subfamily.</text>
</comment>
<gene>
    <name evidence="1" type="primary">matK</name>
</gene>
<dbReference type="EMBL" id="DQ354691">
    <property type="protein sequence ID" value="ABC60439.1"/>
    <property type="molecule type" value="Genomic_DNA"/>
</dbReference>
<dbReference type="RefSeq" id="YP_001001515.1">
    <property type="nucleotide sequence ID" value="NC_008788.1"/>
</dbReference>
<dbReference type="GeneID" id="4699647"/>
<dbReference type="GO" id="GO:0009507">
    <property type="term" value="C:chloroplast"/>
    <property type="evidence" value="ECO:0007669"/>
    <property type="project" value="UniProtKB-SubCell"/>
</dbReference>
<dbReference type="GO" id="GO:0003723">
    <property type="term" value="F:RNA binding"/>
    <property type="evidence" value="ECO:0007669"/>
    <property type="project" value="UniProtKB-KW"/>
</dbReference>
<dbReference type="GO" id="GO:0006397">
    <property type="term" value="P:mRNA processing"/>
    <property type="evidence" value="ECO:0007669"/>
    <property type="project" value="UniProtKB-KW"/>
</dbReference>
<dbReference type="GO" id="GO:0008380">
    <property type="term" value="P:RNA splicing"/>
    <property type="evidence" value="ECO:0007669"/>
    <property type="project" value="UniProtKB-UniRule"/>
</dbReference>
<dbReference type="GO" id="GO:0008033">
    <property type="term" value="P:tRNA processing"/>
    <property type="evidence" value="ECO:0007669"/>
    <property type="project" value="UniProtKB-KW"/>
</dbReference>
<dbReference type="HAMAP" id="MF_01390">
    <property type="entry name" value="MatK"/>
    <property type="match status" value="1"/>
</dbReference>
<dbReference type="InterPro" id="IPR024937">
    <property type="entry name" value="Domain_X"/>
</dbReference>
<dbReference type="InterPro" id="IPR002866">
    <property type="entry name" value="Maturase_MatK"/>
</dbReference>
<dbReference type="InterPro" id="IPR024942">
    <property type="entry name" value="Maturase_MatK_N"/>
</dbReference>
<dbReference type="PANTHER" id="PTHR34811">
    <property type="entry name" value="MATURASE K"/>
    <property type="match status" value="1"/>
</dbReference>
<dbReference type="PANTHER" id="PTHR34811:SF1">
    <property type="entry name" value="MATURASE K"/>
    <property type="match status" value="1"/>
</dbReference>
<dbReference type="Pfam" id="PF01348">
    <property type="entry name" value="Intron_maturas2"/>
    <property type="match status" value="1"/>
</dbReference>
<dbReference type="Pfam" id="PF01824">
    <property type="entry name" value="MatK_N"/>
    <property type="match status" value="1"/>
</dbReference>
<feature type="chain" id="PRO_0000355950" description="Maturase K">
    <location>
        <begin position="1"/>
        <end position="505"/>
    </location>
</feature>
<sequence>MEKLQYELQGYLEIDRYRKQRFLYPLLFREYIYALAHDHGLNSSIFYEPTENLGYDNDNKSSSLIVKRLITRLHQQNHLIISVNDSRFVGPNRSFYSQTISEGFAGIMEIPFSMRLVPSLERIAKYQNLRSIHSIFPFLEDKLSHLYYVSDILIPHPIHLEILLQTLRTRIRDAPSLHLLRCFLHEHHNWNSLITPKKSTSIFSKENQRLFLFLYNSHVYECESVLVFLRKQSSHLRSISSLAFLERTHFYGKIKHLVVAPRNDSQRTLPLWFFKEPLMHYVRYQGKSIMASRCTNLLMKKWKYYLVNFWQCHFHLWSQPGGIHINELSNHSFYFLGYLSGVRLMPWVIRSQMLENSFMIDTAIKRFDTIVPIFPLIGSLVKAKFCNVSGYPISKSVWADSSDSDIIARFGWICRNLSHYHSGSSKKHSLCRIKYILRLSCARTLARKHKSTVRVICKRLGSKLLEEFLTEEQEIVSFIFRGTRLRSERIWYLDIIRINGLVPHS</sequence>
<protein>
    <recommendedName>
        <fullName evidence="1">Maturase K</fullName>
    </recommendedName>
    <alternativeName>
        <fullName evidence="1">Intron maturase</fullName>
    </alternativeName>
</protein>
<evidence type="ECO:0000255" key="1">
    <source>
        <dbReference type="HAMAP-Rule" id="MF_01390"/>
    </source>
</evidence>
<organism>
    <name type="scientific">Nuphar advena</name>
    <name type="common">Common spatterdock</name>
    <name type="synonym">Nuphar lutea subsp. advena</name>
    <dbReference type="NCBI Taxonomy" id="77108"/>
    <lineage>
        <taxon>Eukaryota</taxon>
        <taxon>Viridiplantae</taxon>
        <taxon>Streptophyta</taxon>
        <taxon>Embryophyta</taxon>
        <taxon>Tracheophyta</taxon>
        <taxon>Spermatophyta</taxon>
        <taxon>Magnoliopsida</taxon>
        <taxon>Nymphaeales</taxon>
        <taxon>Nymphaeaceae</taxon>
        <taxon>Nuphar</taxon>
    </lineage>
</organism>